<gene>
    <name type="primary">PUB56</name>
    <name type="ordered locus">At1g01670</name>
    <name type="ORF">T1N6.28</name>
</gene>
<dbReference type="EC" id="2.3.2.27"/>
<dbReference type="EMBL" id="AC009273">
    <property type="protein sequence ID" value="AAF78397.1"/>
    <property type="status" value="ALT_SEQ"/>
    <property type="molecule type" value="Genomic_DNA"/>
</dbReference>
<dbReference type="EMBL" id="CP002684">
    <property type="protein sequence ID" value="AEE27320.1"/>
    <property type="molecule type" value="Genomic_DNA"/>
</dbReference>
<dbReference type="EMBL" id="CP002684">
    <property type="protein sequence ID" value="ANM59608.1"/>
    <property type="molecule type" value="Genomic_DNA"/>
</dbReference>
<dbReference type="EMBL" id="AK118101">
    <property type="protein sequence ID" value="BAC42729.1"/>
    <property type="molecule type" value="mRNA"/>
</dbReference>
<dbReference type="PIR" id="E86147">
    <property type="entry name" value="E86147"/>
</dbReference>
<dbReference type="RefSeq" id="NP_001321953.1">
    <property type="nucleotide sequence ID" value="NM_001331289.1"/>
</dbReference>
<dbReference type="RefSeq" id="NP_171673.2">
    <property type="nucleotide sequence ID" value="NM_100049.4"/>
</dbReference>
<dbReference type="SMR" id="Q8GXQ7"/>
<dbReference type="STRING" id="3702.Q8GXQ7"/>
<dbReference type="PaxDb" id="3702-AT1G01670.1"/>
<dbReference type="EnsemblPlants" id="AT1G01670.1">
    <property type="protein sequence ID" value="AT1G01670.1"/>
    <property type="gene ID" value="AT1G01670"/>
</dbReference>
<dbReference type="EnsemblPlants" id="AT1G01670.2">
    <property type="protein sequence ID" value="AT1G01670.2"/>
    <property type="gene ID" value="AT1G01670"/>
</dbReference>
<dbReference type="GeneID" id="839365"/>
<dbReference type="Gramene" id="AT1G01670.1">
    <property type="protein sequence ID" value="AT1G01670.1"/>
    <property type="gene ID" value="AT1G01670"/>
</dbReference>
<dbReference type="Gramene" id="AT1G01670.2">
    <property type="protein sequence ID" value="AT1G01670.2"/>
    <property type="gene ID" value="AT1G01670"/>
</dbReference>
<dbReference type="KEGG" id="ath:AT1G01670"/>
<dbReference type="Araport" id="AT1G01670"/>
<dbReference type="TAIR" id="AT1G01670"/>
<dbReference type="eggNOG" id="ENOG502R7RK">
    <property type="taxonomic scope" value="Eukaryota"/>
</dbReference>
<dbReference type="HOGENOM" id="CLU_036548_0_0_1"/>
<dbReference type="InParanoid" id="Q8GXQ7"/>
<dbReference type="OMA" id="CKIWLVC"/>
<dbReference type="PhylomeDB" id="Q8GXQ7"/>
<dbReference type="UniPathway" id="UPA00143"/>
<dbReference type="PRO" id="PR:Q8GXQ7"/>
<dbReference type="Proteomes" id="UP000006548">
    <property type="component" value="Chromosome 1"/>
</dbReference>
<dbReference type="ExpressionAtlas" id="Q8GXQ7">
    <property type="expression patterns" value="baseline and differential"/>
</dbReference>
<dbReference type="GO" id="GO:0004842">
    <property type="term" value="F:ubiquitin-protein transferase activity"/>
    <property type="evidence" value="ECO:0007669"/>
    <property type="project" value="InterPro"/>
</dbReference>
<dbReference type="GO" id="GO:0016567">
    <property type="term" value="P:protein ubiquitination"/>
    <property type="evidence" value="ECO:0007669"/>
    <property type="project" value="UniProtKB-UniPathway"/>
</dbReference>
<dbReference type="CDD" id="cd16655">
    <property type="entry name" value="RING-Ubox_WDSUB1-like"/>
    <property type="match status" value="1"/>
</dbReference>
<dbReference type="Gene3D" id="3.30.40.10">
    <property type="entry name" value="Zinc/RING finger domain, C3HC4 (zinc finger)"/>
    <property type="match status" value="1"/>
</dbReference>
<dbReference type="InterPro" id="IPR051348">
    <property type="entry name" value="U-box_ubiquitin_ligases"/>
</dbReference>
<dbReference type="InterPro" id="IPR003613">
    <property type="entry name" value="Ubox_domain"/>
</dbReference>
<dbReference type="InterPro" id="IPR013083">
    <property type="entry name" value="Znf_RING/FYVE/PHD"/>
</dbReference>
<dbReference type="PANTHER" id="PTHR45647">
    <property type="entry name" value="OS02G0152300 PROTEIN"/>
    <property type="match status" value="1"/>
</dbReference>
<dbReference type="PANTHER" id="PTHR45647:SF62">
    <property type="entry name" value="U-BOX DOMAIN-CONTAINING PROTEIN 56"/>
    <property type="match status" value="1"/>
</dbReference>
<dbReference type="Pfam" id="PF04564">
    <property type="entry name" value="U-box"/>
    <property type="match status" value="1"/>
</dbReference>
<dbReference type="SMART" id="SM00504">
    <property type="entry name" value="Ubox"/>
    <property type="match status" value="1"/>
</dbReference>
<dbReference type="SUPFAM" id="SSF57850">
    <property type="entry name" value="RING/U-box"/>
    <property type="match status" value="1"/>
</dbReference>
<dbReference type="PROSITE" id="PS51698">
    <property type="entry name" value="U_BOX"/>
    <property type="match status" value="1"/>
</dbReference>
<sequence>MTPSSSGLEQSEIDAIQELEQTSRNDTLLKYHDICIDEGVIEQDVDMSCFSANSVGEWIVELIYQNNIKKLIMGATADSHYSEGMVHITPTKADYVIQHAPHCCNIWLVCNGNLIQTREGRFEHAGSAYSSSSSLHSIDSALIPYGGAGRAERVTEPHALSSSEEQSARGIEKMYYEEQRRRLEIEELKREKEQRDKMRRVREEALSSSSGVTKILYNEEVMRRREVEAELNRAKAEIEDMKRVQIELKEQHYADCRLLEKERDEAIKTTEELLRALEKGESSIPLQWSVSIEPPQCFICPISKDIMQNPHVAADGYTYEADEFRRWLNHGGEKSPMTNLRLENRNLIPNLVLRSAIKDWLQQHP</sequence>
<accession>Q8GXQ7</accession>
<accession>Q9LQ93</accession>
<protein>
    <recommendedName>
        <fullName>U-box domain-containing protein 56</fullName>
        <ecNumber>2.3.2.27</ecNumber>
    </recommendedName>
    <alternativeName>
        <fullName>Plant U-box protein 56</fullName>
    </alternativeName>
    <alternativeName>
        <fullName evidence="3">RING-type E3 ubiquitin transferase PUB56</fullName>
    </alternativeName>
</protein>
<evidence type="ECO:0000250" key="1"/>
<evidence type="ECO:0000255" key="2"/>
<evidence type="ECO:0000305" key="3"/>
<name>PUB56_ARATH</name>
<reference key="1">
    <citation type="journal article" date="2000" name="Nature">
        <title>Sequence and analysis of chromosome 1 of the plant Arabidopsis thaliana.</title>
        <authorList>
            <person name="Theologis A."/>
            <person name="Ecker J.R."/>
            <person name="Palm C.J."/>
            <person name="Federspiel N.A."/>
            <person name="Kaul S."/>
            <person name="White O."/>
            <person name="Alonso J."/>
            <person name="Altafi H."/>
            <person name="Araujo R."/>
            <person name="Bowman C.L."/>
            <person name="Brooks S.Y."/>
            <person name="Buehler E."/>
            <person name="Chan A."/>
            <person name="Chao Q."/>
            <person name="Chen H."/>
            <person name="Cheuk R.F."/>
            <person name="Chin C.W."/>
            <person name="Chung M.K."/>
            <person name="Conn L."/>
            <person name="Conway A.B."/>
            <person name="Conway A.R."/>
            <person name="Creasy T.H."/>
            <person name="Dewar K."/>
            <person name="Dunn P."/>
            <person name="Etgu P."/>
            <person name="Feldblyum T.V."/>
            <person name="Feng J.-D."/>
            <person name="Fong B."/>
            <person name="Fujii C.Y."/>
            <person name="Gill J.E."/>
            <person name="Goldsmith A.D."/>
            <person name="Haas B."/>
            <person name="Hansen N.F."/>
            <person name="Hughes B."/>
            <person name="Huizar L."/>
            <person name="Hunter J.L."/>
            <person name="Jenkins J."/>
            <person name="Johnson-Hopson C."/>
            <person name="Khan S."/>
            <person name="Khaykin E."/>
            <person name="Kim C.J."/>
            <person name="Koo H.L."/>
            <person name="Kremenetskaia I."/>
            <person name="Kurtz D.B."/>
            <person name="Kwan A."/>
            <person name="Lam B."/>
            <person name="Langin-Hooper S."/>
            <person name="Lee A."/>
            <person name="Lee J.M."/>
            <person name="Lenz C.A."/>
            <person name="Li J.H."/>
            <person name="Li Y.-P."/>
            <person name="Lin X."/>
            <person name="Liu S.X."/>
            <person name="Liu Z.A."/>
            <person name="Luros J.S."/>
            <person name="Maiti R."/>
            <person name="Marziali A."/>
            <person name="Militscher J."/>
            <person name="Miranda M."/>
            <person name="Nguyen M."/>
            <person name="Nierman W.C."/>
            <person name="Osborne B.I."/>
            <person name="Pai G."/>
            <person name="Peterson J."/>
            <person name="Pham P.K."/>
            <person name="Rizzo M."/>
            <person name="Rooney T."/>
            <person name="Rowley D."/>
            <person name="Sakano H."/>
            <person name="Salzberg S.L."/>
            <person name="Schwartz J.R."/>
            <person name="Shinn P."/>
            <person name="Southwick A.M."/>
            <person name="Sun H."/>
            <person name="Tallon L.J."/>
            <person name="Tambunga G."/>
            <person name="Toriumi M.J."/>
            <person name="Town C.D."/>
            <person name="Utterback T."/>
            <person name="Van Aken S."/>
            <person name="Vaysberg M."/>
            <person name="Vysotskaia V.S."/>
            <person name="Walker M."/>
            <person name="Wu D."/>
            <person name="Yu G."/>
            <person name="Fraser C.M."/>
            <person name="Venter J.C."/>
            <person name="Davis R.W."/>
        </authorList>
    </citation>
    <scope>NUCLEOTIDE SEQUENCE [LARGE SCALE GENOMIC DNA]</scope>
    <source>
        <strain>cv. Columbia</strain>
    </source>
</reference>
<reference key="2">
    <citation type="journal article" date="2017" name="Plant J.">
        <title>Araport11: a complete reannotation of the Arabidopsis thaliana reference genome.</title>
        <authorList>
            <person name="Cheng C.Y."/>
            <person name="Krishnakumar V."/>
            <person name="Chan A.P."/>
            <person name="Thibaud-Nissen F."/>
            <person name="Schobel S."/>
            <person name="Town C.D."/>
        </authorList>
    </citation>
    <scope>GENOME REANNOTATION</scope>
    <source>
        <strain>cv. Columbia</strain>
    </source>
</reference>
<reference key="3">
    <citation type="journal article" date="2002" name="Science">
        <title>Functional annotation of a full-length Arabidopsis cDNA collection.</title>
        <authorList>
            <person name="Seki M."/>
            <person name="Narusaka M."/>
            <person name="Kamiya A."/>
            <person name="Ishida J."/>
            <person name="Satou M."/>
            <person name="Sakurai T."/>
            <person name="Nakajima M."/>
            <person name="Enju A."/>
            <person name="Akiyama K."/>
            <person name="Oono Y."/>
            <person name="Muramatsu M."/>
            <person name="Hayashizaki Y."/>
            <person name="Kawai J."/>
            <person name="Carninci P."/>
            <person name="Itoh M."/>
            <person name="Ishii Y."/>
            <person name="Arakawa T."/>
            <person name="Shibata K."/>
            <person name="Shinagawa A."/>
            <person name="Shinozaki K."/>
        </authorList>
    </citation>
    <scope>NUCLEOTIDE SEQUENCE [LARGE SCALE MRNA]</scope>
    <source>
        <strain>cv. Columbia</strain>
    </source>
</reference>
<comment type="function">
    <text evidence="1">Functions as an E3 ubiquitin ligase.</text>
</comment>
<comment type="catalytic activity">
    <reaction>
        <text>S-ubiquitinyl-[E2 ubiquitin-conjugating enzyme]-L-cysteine + [acceptor protein]-L-lysine = [E2 ubiquitin-conjugating enzyme]-L-cysteine + N(6)-ubiquitinyl-[acceptor protein]-L-lysine.</text>
        <dbReference type="EC" id="2.3.2.27"/>
    </reaction>
</comment>
<comment type="pathway">
    <text>Protein modification; protein ubiquitination.</text>
</comment>
<comment type="sequence caution" evidence="3">
    <conflict type="erroneous gene model prediction">
        <sequence resource="EMBL-CDS" id="AAF78397"/>
    </conflict>
    <text>The predicted gene has been split into 2 genes: At1g01660 and At1g01670.</text>
</comment>
<proteinExistence type="evidence at transcript level"/>
<keyword id="KW-0175">Coiled coil</keyword>
<keyword id="KW-1185">Reference proteome</keyword>
<keyword id="KW-0808">Transferase</keyword>
<keyword id="KW-0833">Ubl conjugation pathway</keyword>
<feature type="chain" id="PRO_0000322191" description="U-box domain-containing protein 56">
    <location>
        <begin position="1"/>
        <end position="365"/>
    </location>
</feature>
<feature type="domain" description="U-box">
    <location>
        <begin position="293"/>
        <end position="365"/>
    </location>
</feature>
<feature type="coiled-coil region" evidence="2">
    <location>
        <begin position="176"/>
        <end position="281"/>
    </location>
</feature>
<organism>
    <name type="scientific">Arabidopsis thaliana</name>
    <name type="common">Mouse-ear cress</name>
    <dbReference type="NCBI Taxonomy" id="3702"/>
    <lineage>
        <taxon>Eukaryota</taxon>
        <taxon>Viridiplantae</taxon>
        <taxon>Streptophyta</taxon>
        <taxon>Embryophyta</taxon>
        <taxon>Tracheophyta</taxon>
        <taxon>Spermatophyta</taxon>
        <taxon>Magnoliopsida</taxon>
        <taxon>eudicotyledons</taxon>
        <taxon>Gunneridae</taxon>
        <taxon>Pentapetalae</taxon>
        <taxon>rosids</taxon>
        <taxon>malvids</taxon>
        <taxon>Brassicales</taxon>
        <taxon>Brassicaceae</taxon>
        <taxon>Camelineae</taxon>
        <taxon>Arabidopsis</taxon>
    </lineage>
</organism>